<sequence>MTPLVKDIIMSSTRMPALFLGHGSPMNVLEDNLYTRSWQKLGMTLPRPQAIVVVSAHWFTRGTGVTAMETPPTIHDFGGFPQALYDTHYPAPGSPALAQRLVELLAPIPVTLDKEAWGFDHGSWGVLIKMYPDADIPMVQLSIDSSKPAAWHFEMGRKLAALRDEGIMLVASGNVVHNLRTVKWHGDSSPYPWATSFNEYVKANLTWQGPVEQHPLVNYLDHEGGTLSNPTPEHYLPLLYVLGAWDGQEPITIPVEGIEMGSLSMLSVQIG</sequence>
<evidence type="ECO:0000250" key="1"/>
<evidence type="ECO:0000269" key="2">
    <source>
    </source>
</evidence>
<evidence type="ECO:0000269" key="3">
    <source ref="5"/>
</evidence>
<evidence type="ECO:0000305" key="4"/>
<evidence type="ECO:0000305" key="5">
    <source>
    </source>
</evidence>
<evidence type="ECO:0007829" key="6">
    <source>
        <dbReference type="PDB" id="2PW6"/>
    </source>
</evidence>
<proteinExistence type="evidence at protein level"/>
<protein>
    <recommendedName>
        <fullName evidence="4">4,5-DOPA dioxygenase extradiol</fullName>
        <ecNumber evidence="2">1.13.11.29</ecNumber>
    </recommendedName>
</protein>
<organism>
    <name type="scientific">Escherichia coli (strain K12)</name>
    <dbReference type="NCBI Taxonomy" id="83333"/>
    <lineage>
        <taxon>Bacteria</taxon>
        <taxon>Pseudomonadati</taxon>
        <taxon>Pseudomonadota</taxon>
        <taxon>Gammaproteobacteria</taxon>
        <taxon>Enterobacterales</taxon>
        <taxon>Enterobacteriaceae</taxon>
        <taxon>Escherichia</taxon>
    </lineage>
</organism>
<reference key="1">
    <citation type="journal article" date="1992" name="Biochim. Biophys. Acta">
        <title>Nucleotide sequence of a region duplicated in Escherichia coli toc mutants.</title>
        <authorList>
            <person name="Yang T.-P."/>
            <person name="Depew R.E."/>
        </authorList>
    </citation>
    <scope>NUCLEOTIDE SEQUENCE [GENOMIC DNA]</scope>
</reference>
<reference key="2">
    <citation type="journal article" date="1997" name="Science">
        <title>The complete genome sequence of Escherichia coli K-12.</title>
        <authorList>
            <person name="Blattner F.R."/>
            <person name="Plunkett G. III"/>
            <person name="Bloch C.A."/>
            <person name="Perna N.T."/>
            <person name="Burland V."/>
            <person name="Riley M."/>
            <person name="Collado-Vides J."/>
            <person name="Glasner J.D."/>
            <person name="Rode C.K."/>
            <person name="Mayhew G.F."/>
            <person name="Gregor J."/>
            <person name="Davis N.W."/>
            <person name="Kirkpatrick H.A."/>
            <person name="Goeden M.A."/>
            <person name="Rose D.J."/>
            <person name="Mau B."/>
            <person name="Shao Y."/>
        </authorList>
    </citation>
    <scope>NUCLEOTIDE SEQUENCE [LARGE SCALE GENOMIC DNA]</scope>
    <source>
        <strain>K12 / MG1655 / ATCC 47076</strain>
    </source>
</reference>
<reference key="3">
    <citation type="journal article" date="2006" name="Mol. Syst. Biol.">
        <title>Highly accurate genome sequences of Escherichia coli K-12 strains MG1655 and W3110.</title>
        <authorList>
            <person name="Hayashi K."/>
            <person name="Morooka N."/>
            <person name="Yamamoto Y."/>
            <person name="Fujita K."/>
            <person name="Isono K."/>
            <person name="Choi S."/>
            <person name="Ohtsubo E."/>
            <person name="Baba T."/>
            <person name="Wanner B.L."/>
            <person name="Mori H."/>
            <person name="Horiuchi T."/>
        </authorList>
    </citation>
    <scope>NUCLEOTIDE SEQUENCE [LARGE SCALE GENOMIC DNA]</scope>
    <source>
        <strain>K12 / W3110 / ATCC 27325 / DSM 5911</strain>
    </source>
</reference>
<reference key="4">
    <citation type="journal article" date="2014" name="Appl. Microbiol. Biotechnol.">
        <title>Escherichia coli protein YgiD produces the structural unit of plant pigments betalains: characterization of a prokaryotic enzyme with DOPA-extradiol-dioxygenase activity.</title>
        <authorList>
            <person name="Gandia-Herrero F."/>
            <person name="Garcia-Carmona F."/>
        </authorList>
    </citation>
    <scope>FUNCTION</scope>
    <scope>CATALYTIC ACTIVITY</scope>
    <scope>BIOPHYSICOCHEMICAL PROPERTIES</scope>
    <scope>SUBUNIT</scope>
    <scope>SUBCELLULAR LOCATION</scope>
    <source>
        <strain>K12 / MG1655 / ATCC 47076</strain>
    </source>
</reference>
<reference key="5">
    <citation type="submission" date="2007-06" db="PDB data bank">
        <title>Crystal structure of uncharacterized protein JW3007 from Escherichia coli K12.</title>
        <authorList>
            <consortium name="Southeast collaboratory for structural genomics (SECSG)"/>
        </authorList>
    </citation>
    <scope>X-RAY CRYSTALLOGRAPHY (2.27 ANGSTROMS)</scope>
    <scope>ZINC BINDING</scope>
</reference>
<gene>
    <name type="primary">ygiD</name>
    <name type="ordered locus">b3039</name>
    <name type="ordered locus">JW3007</name>
</gene>
<accession>P24197</accession>
<accession>Q2M9G1</accession>
<comment type="function">
    <text evidence="2">In vitro, opens the cyclic ring of dihydroxy-phenylalanine (DOPA) between carbons 4 and 5, thus producing an unstable seco-DOPA that rearranges nonenzymatically to betalamic acid. The physiological substrate is unknown.</text>
</comment>
<comment type="catalytic activity">
    <reaction evidence="2">
        <text>L-dopa + O2 = 4-(L-alanin-3-yl)-2-hydroxy-cis,cis-muconate 6-semialdehyde + H(+)</text>
        <dbReference type="Rhea" id="RHEA:21220"/>
        <dbReference type="ChEBI" id="CHEBI:15378"/>
        <dbReference type="ChEBI" id="CHEBI:15379"/>
        <dbReference type="ChEBI" id="CHEBI:57504"/>
        <dbReference type="ChEBI" id="CHEBI:57639"/>
        <dbReference type="EC" id="1.13.11.29"/>
    </reaction>
</comment>
<comment type="cofactor">
    <cofactor evidence="1">
        <name>Zn(2+)</name>
        <dbReference type="ChEBI" id="CHEBI:29105"/>
    </cofactor>
</comment>
<comment type="biophysicochemical properties">
    <kinetics>
        <KM evidence="2">7.9 mM for L-DOPA</KM>
        <text evidence="2">kcat is 0.17 min(-1) with L-DOPA.</text>
    </kinetics>
    <phDependence>
        <text evidence="2">Optimum pH is 8.0.</text>
    </phDependence>
</comment>
<comment type="subunit">
    <text evidence="2">Monomer.</text>
</comment>
<comment type="subcellular location">
    <subcellularLocation>
        <location evidence="2">Cytoplasm</location>
    </subcellularLocation>
</comment>
<comment type="miscellaneous">
    <text evidence="5">Betalamic acid is the structural unit of the betalains, natural nitrogen-containing water-soluble pigments with high colorant and bioactive properties, characteristic of plants of the order Caryophyllales.</text>
</comment>
<comment type="similarity">
    <text evidence="4">Belongs to the DODA-type extradiol aromatic ring-opening dioxygenase family.</text>
</comment>
<comment type="caution">
    <text evidence="4">It is uncertain whether Met-1 or Met-10 is the initiator.</text>
</comment>
<keyword id="KW-0002">3D-structure</keyword>
<keyword id="KW-0963">Cytoplasm</keyword>
<keyword id="KW-0223">Dioxygenase</keyword>
<keyword id="KW-0479">Metal-binding</keyword>
<keyword id="KW-0560">Oxidoreductase</keyword>
<keyword id="KW-1185">Reference proteome</keyword>
<keyword id="KW-0862">Zinc</keyword>
<dbReference type="EC" id="1.13.11.29" evidence="2"/>
<dbReference type="EMBL" id="M77129">
    <property type="protein sequence ID" value="AAA71877.1"/>
    <property type="molecule type" value="Genomic_DNA"/>
</dbReference>
<dbReference type="EMBL" id="U28377">
    <property type="protein sequence ID" value="AAA69207.1"/>
    <property type="molecule type" value="Genomic_DNA"/>
</dbReference>
<dbReference type="EMBL" id="U00096">
    <property type="protein sequence ID" value="AAC76075.3"/>
    <property type="molecule type" value="Genomic_DNA"/>
</dbReference>
<dbReference type="EMBL" id="AP009048">
    <property type="protein sequence ID" value="BAE77095.1"/>
    <property type="molecule type" value="Genomic_DNA"/>
</dbReference>
<dbReference type="PIR" id="E65091">
    <property type="entry name" value="E65091"/>
</dbReference>
<dbReference type="RefSeq" id="NP_417511.2">
    <property type="nucleotide sequence ID" value="NC_000913.3"/>
</dbReference>
<dbReference type="PDB" id="2PW6">
    <property type="method" value="X-ray"/>
    <property type="resolution" value="2.27 A"/>
    <property type="chains" value="A=1-271"/>
</dbReference>
<dbReference type="PDBsum" id="2PW6"/>
<dbReference type="SMR" id="P24197"/>
<dbReference type="BioGRID" id="4263035">
    <property type="interactions" value="7"/>
</dbReference>
<dbReference type="FunCoup" id="P24197">
    <property type="interactions" value="318"/>
</dbReference>
<dbReference type="IntAct" id="P24197">
    <property type="interactions" value="3"/>
</dbReference>
<dbReference type="STRING" id="511145.b3039"/>
<dbReference type="PaxDb" id="511145-b3039"/>
<dbReference type="EnsemblBacteria" id="AAC76075">
    <property type="protein sequence ID" value="AAC76075"/>
    <property type="gene ID" value="b3039"/>
</dbReference>
<dbReference type="GeneID" id="946447"/>
<dbReference type="KEGG" id="ecj:JW3007"/>
<dbReference type="KEGG" id="eco:b3039"/>
<dbReference type="PATRIC" id="fig|1411691.4.peg.3693"/>
<dbReference type="EchoBASE" id="EB1154"/>
<dbReference type="eggNOG" id="COG3384">
    <property type="taxonomic scope" value="Bacteria"/>
</dbReference>
<dbReference type="HOGENOM" id="CLU_046582_2_0_6"/>
<dbReference type="InParanoid" id="P24197"/>
<dbReference type="OMA" id="EWGFDHG"/>
<dbReference type="OrthoDB" id="9790889at2"/>
<dbReference type="BioCyc" id="EcoCyc:EG11166-MONOMER"/>
<dbReference type="BioCyc" id="MetaCyc:EG11166-MONOMER"/>
<dbReference type="EvolutionaryTrace" id="P24197"/>
<dbReference type="PRO" id="PR:P24197"/>
<dbReference type="Proteomes" id="UP000000625">
    <property type="component" value="Chromosome"/>
</dbReference>
<dbReference type="GO" id="GO:0005737">
    <property type="term" value="C:cytoplasm"/>
    <property type="evidence" value="ECO:0007669"/>
    <property type="project" value="UniProtKB-SubCell"/>
</dbReference>
<dbReference type="GO" id="GO:0008198">
    <property type="term" value="F:ferrous iron binding"/>
    <property type="evidence" value="ECO:0007669"/>
    <property type="project" value="InterPro"/>
</dbReference>
<dbReference type="GO" id="GO:0050297">
    <property type="term" value="F:stizolobate synthase activity"/>
    <property type="evidence" value="ECO:0000314"/>
    <property type="project" value="EcoCyc"/>
</dbReference>
<dbReference type="GO" id="GO:0008270">
    <property type="term" value="F:zinc ion binding"/>
    <property type="evidence" value="ECO:0007669"/>
    <property type="project" value="InterPro"/>
</dbReference>
<dbReference type="CDD" id="cd07363">
    <property type="entry name" value="45_DOPA_Dioxygenase"/>
    <property type="match status" value="1"/>
</dbReference>
<dbReference type="FunFam" id="3.40.830.10:FF:000003">
    <property type="entry name" value="4,5-DOPA dioxygenase extradiol"/>
    <property type="match status" value="1"/>
</dbReference>
<dbReference type="Gene3D" id="3.40.830.10">
    <property type="entry name" value="LigB-like"/>
    <property type="match status" value="1"/>
</dbReference>
<dbReference type="InterPro" id="IPR014436">
    <property type="entry name" value="Extradiol_dOase_DODA"/>
</dbReference>
<dbReference type="InterPro" id="IPR004183">
    <property type="entry name" value="Xdiol_dOase_suB"/>
</dbReference>
<dbReference type="NCBIfam" id="NF007914">
    <property type="entry name" value="PRK10628.1"/>
    <property type="match status" value="1"/>
</dbReference>
<dbReference type="PANTHER" id="PTHR30096">
    <property type="entry name" value="4,5-DOPA DIOXYGENASE EXTRADIOL-LIKE PROTEIN"/>
    <property type="match status" value="1"/>
</dbReference>
<dbReference type="PANTHER" id="PTHR30096:SF0">
    <property type="entry name" value="4,5-DOPA DIOXYGENASE EXTRADIOL-LIKE PROTEIN"/>
    <property type="match status" value="1"/>
</dbReference>
<dbReference type="Pfam" id="PF02900">
    <property type="entry name" value="LigB"/>
    <property type="match status" value="1"/>
</dbReference>
<dbReference type="PIRSF" id="PIRSF006157">
    <property type="entry name" value="Doxgns_DODA"/>
    <property type="match status" value="1"/>
</dbReference>
<dbReference type="SUPFAM" id="SSF53213">
    <property type="entry name" value="LigB-like"/>
    <property type="match status" value="1"/>
</dbReference>
<name>YGID_ECOLI</name>
<feature type="chain" id="PRO_0000169405" description="4,5-DOPA dioxygenase extradiol">
    <location>
        <begin position="1"/>
        <end position="271"/>
    </location>
</feature>
<feature type="binding site" evidence="3">
    <location>
        <position position="22"/>
    </location>
    <ligand>
        <name>Zn(2+)</name>
        <dbReference type="ChEBI" id="CHEBI:29105"/>
    </ligand>
</feature>
<feature type="binding site" evidence="3">
    <location>
        <position position="57"/>
    </location>
    <ligand>
        <name>Zn(2+)</name>
        <dbReference type="ChEBI" id="CHEBI:29105"/>
    </ligand>
</feature>
<feature type="binding site" evidence="3">
    <location>
        <position position="177"/>
    </location>
    <ligand>
        <name>Zn(2+)</name>
        <dbReference type="ChEBI" id="CHEBI:29105"/>
    </ligand>
</feature>
<feature type="binding site" evidence="3">
    <location>
        <position position="234"/>
    </location>
    <ligand>
        <name>Zn(2+)</name>
        <dbReference type="ChEBI" id="CHEBI:29105"/>
    </ligand>
</feature>
<feature type="sequence conflict" description="In Ref. 1; AAA71877." evidence="4" ref="1">
    <original>GAWDGQEPITIPVEGIEMGSLSMLSVQI</original>
    <variation>RYVGWAGANYHS</variation>
    <location>
        <begin position="243"/>
        <end position="270"/>
    </location>
</feature>
<feature type="strand" evidence="6">
    <location>
        <begin position="17"/>
        <end position="21"/>
    </location>
</feature>
<feature type="helix" evidence="6">
    <location>
        <begin position="33"/>
        <end position="44"/>
    </location>
</feature>
<feature type="strand" evidence="6">
    <location>
        <begin position="49"/>
        <end position="66"/>
    </location>
</feature>
<feature type="helix" evidence="6">
    <location>
        <begin position="95"/>
        <end position="105"/>
    </location>
</feature>
<feature type="strand" evidence="6">
    <location>
        <begin position="110"/>
        <end position="115"/>
    </location>
</feature>
<feature type="helix" evidence="6">
    <location>
        <begin position="121"/>
        <end position="130"/>
    </location>
</feature>
<feature type="strand" evidence="6">
    <location>
        <begin position="138"/>
        <end position="144"/>
    </location>
</feature>
<feature type="helix" evidence="6">
    <location>
        <begin position="149"/>
        <end position="159"/>
    </location>
</feature>
<feature type="helix" evidence="6">
    <location>
        <begin position="160"/>
        <end position="165"/>
    </location>
</feature>
<feature type="strand" evidence="6">
    <location>
        <begin position="167"/>
        <end position="173"/>
    </location>
</feature>
<feature type="strand" evidence="6">
    <location>
        <begin position="184"/>
        <end position="186"/>
    </location>
</feature>
<feature type="helix" evidence="6">
    <location>
        <begin position="192"/>
        <end position="202"/>
    </location>
</feature>
<feature type="turn" evidence="6">
    <location>
        <begin position="203"/>
        <end position="206"/>
    </location>
</feature>
<feature type="helix" evidence="6">
    <location>
        <begin position="211"/>
        <end position="213"/>
    </location>
</feature>
<feature type="turn" evidence="6">
    <location>
        <begin position="215"/>
        <end position="217"/>
    </location>
</feature>
<feature type="helix" evidence="6">
    <location>
        <begin position="219"/>
        <end position="221"/>
    </location>
</feature>
<feature type="helix" evidence="6">
    <location>
        <begin position="225"/>
        <end position="228"/>
    </location>
</feature>
<feature type="strand" evidence="6">
    <location>
        <begin position="230"/>
        <end position="232"/>
    </location>
</feature>
<feature type="turn" evidence="6">
    <location>
        <begin position="233"/>
        <end position="235"/>
    </location>
</feature>
<feature type="helix" evidence="6">
    <location>
        <begin position="236"/>
        <end position="243"/>
    </location>
</feature>
<feature type="strand" evidence="6">
    <location>
        <begin position="247"/>
        <end position="249"/>
    </location>
</feature>
<feature type="turn" evidence="6">
    <location>
        <begin position="260"/>
        <end position="262"/>
    </location>
</feature>
<feature type="strand" evidence="6">
    <location>
        <begin position="268"/>
        <end position="270"/>
    </location>
</feature>